<organism>
    <name type="scientific">Sorangium cellulosum (strain So ce56)</name>
    <name type="common">Polyangium cellulosum (strain So ce56)</name>
    <dbReference type="NCBI Taxonomy" id="448385"/>
    <lineage>
        <taxon>Bacteria</taxon>
        <taxon>Pseudomonadati</taxon>
        <taxon>Myxococcota</taxon>
        <taxon>Polyangia</taxon>
        <taxon>Polyangiales</taxon>
        <taxon>Polyangiaceae</taxon>
        <taxon>Sorangium</taxon>
    </lineage>
</organism>
<accession>A9G0D6</accession>
<comment type="function">
    <text evidence="1">Binds directly to 16S ribosomal RNA.</text>
</comment>
<comment type="similarity">
    <text evidence="1">Belongs to the bacterial ribosomal protein bS20 family.</text>
</comment>
<keyword id="KW-1185">Reference proteome</keyword>
<keyword id="KW-0687">Ribonucleoprotein</keyword>
<keyword id="KW-0689">Ribosomal protein</keyword>
<keyword id="KW-0694">RNA-binding</keyword>
<keyword id="KW-0699">rRNA-binding</keyword>
<protein>
    <recommendedName>
        <fullName evidence="1">Small ribosomal subunit protein bS20</fullName>
    </recommendedName>
    <alternativeName>
        <fullName evidence="3">30S ribosomal protein S20</fullName>
    </alternativeName>
</protein>
<feature type="chain" id="PRO_1000081452" description="Small ribosomal subunit protein bS20">
    <location>
        <begin position="1"/>
        <end position="94"/>
    </location>
</feature>
<feature type="region of interest" description="Disordered" evidence="2">
    <location>
        <begin position="1"/>
        <end position="20"/>
    </location>
</feature>
<feature type="compositionally biased region" description="Basic and acidic residues" evidence="2">
    <location>
        <begin position="1"/>
        <end position="10"/>
    </location>
</feature>
<feature type="compositionally biased region" description="Basic residues" evidence="2">
    <location>
        <begin position="11"/>
        <end position="20"/>
    </location>
</feature>
<proteinExistence type="inferred from homology"/>
<reference key="1">
    <citation type="journal article" date="2007" name="Nat. Biotechnol.">
        <title>Complete genome sequence of the myxobacterium Sorangium cellulosum.</title>
        <authorList>
            <person name="Schneiker S."/>
            <person name="Perlova O."/>
            <person name="Kaiser O."/>
            <person name="Gerth K."/>
            <person name="Alici A."/>
            <person name="Altmeyer M.O."/>
            <person name="Bartels D."/>
            <person name="Bekel T."/>
            <person name="Beyer S."/>
            <person name="Bode E."/>
            <person name="Bode H.B."/>
            <person name="Bolten C.J."/>
            <person name="Choudhuri J.V."/>
            <person name="Doss S."/>
            <person name="Elnakady Y.A."/>
            <person name="Frank B."/>
            <person name="Gaigalat L."/>
            <person name="Goesmann A."/>
            <person name="Groeger C."/>
            <person name="Gross F."/>
            <person name="Jelsbak L."/>
            <person name="Jelsbak L."/>
            <person name="Kalinowski J."/>
            <person name="Kegler C."/>
            <person name="Knauber T."/>
            <person name="Konietzny S."/>
            <person name="Kopp M."/>
            <person name="Krause L."/>
            <person name="Krug D."/>
            <person name="Linke B."/>
            <person name="Mahmud T."/>
            <person name="Martinez-Arias R."/>
            <person name="McHardy A.C."/>
            <person name="Merai M."/>
            <person name="Meyer F."/>
            <person name="Mormann S."/>
            <person name="Munoz-Dorado J."/>
            <person name="Perez J."/>
            <person name="Pradella S."/>
            <person name="Rachid S."/>
            <person name="Raddatz G."/>
            <person name="Rosenau F."/>
            <person name="Rueckert C."/>
            <person name="Sasse F."/>
            <person name="Scharfe M."/>
            <person name="Schuster S.C."/>
            <person name="Suen G."/>
            <person name="Treuner-Lange A."/>
            <person name="Velicer G.J."/>
            <person name="Vorholter F.-J."/>
            <person name="Weissman K.J."/>
            <person name="Welch R.D."/>
            <person name="Wenzel S.C."/>
            <person name="Whitworth D.E."/>
            <person name="Wilhelm S."/>
            <person name="Wittmann C."/>
            <person name="Bloecker H."/>
            <person name="Puehler A."/>
            <person name="Mueller R."/>
        </authorList>
    </citation>
    <scope>NUCLEOTIDE SEQUENCE [LARGE SCALE GENOMIC DNA]</scope>
    <source>
        <strain>So ce56</strain>
    </source>
</reference>
<dbReference type="EMBL" id="AM746676">
    <property type="protein sequence ID" value="CAN98848.1"/>
    <property type="molecule type" value="Genomic_DNA"/>
</dbReference>
<dbReference type="RefSeq" id="WP_012241287.1">
    <property type="nucleotide sequence ID" value="NC_010162.1"/>
</dbReference>
<dbReference type="SMR" id="A9G0D6"/>
<dbReference type="STRING" id="448385.sce8677"/>
<dbReference type="KEGG" id="scl:sce8677"/>
<dbReference type="eggNOG" id="COG0268">
    <property type="taxonomic scope" value="Bacteria"/>
</dbReference>
<dbReference type="HOGENOM" id="CLU_160655_1_0_7"/>
<dbReference type="OrthoDB" id="9807974at2"/>
<dbReference type="BioCyc" id="SCEL448385:SCE_RS44460-MONOMER"/>
<dbReference type="Proteomes" id="UP000002139">
    <property type="component" value="Chromosome"/>
</dbReference>
<dbReference type="GO" id="GO:0015935">
    <property type="term" value="C:small ribosomal subunit"/>
    <property type="evidence" value="ECO:0007669"/>
    <property type="project" value="TreeGrafter"/>
</dbReference>
<dbReference type="GO" id="GO:0070181">
    <property type="term" value="F:small ribosomal subunit rRNA binding"/>
    <property type="evidence" value="ECO:0007669"/>
    <property type="project" value="TreeGrafter"/>
</dbReference>
<dbReference type="GO" id="GO:0003735">
    <property type="term" value="F:structural constituent of ribosome"/>
    <property type="evidence" value="ECO:0007669"/>
    <property type="project" value="InterPro"/>
</dbReference>
<dbReference type="GO" id="GO:0006412">
    <property type="term" value="P:translation"/>
    <property type="evidence" value="ECO:0007669"/>
    <property type="project" value="UniProtKB-UniRule"/>
</dbReference>
<dbReference type="Gene3D" id="1.20.58.110">
    <property type="entry name" value="Ribosomal protein S20"/>
    <property type="match status" value="1"/>
</dbReference>
<dbReference type="HAMAP" id="MF_00500">
    <property type="entry name" value="Ribosomal_bS20"/>
    <property type="match status" value="1"/>
</dbReference>
<dbReference type="InterPro" id="IPR002583">
    <property type="entry name" value="Ribosomal_bS20"/>
</dbReference>
<dbReference type="InterPro" id="IPR036510">
    <property type="entry name" value="Ribosomal_bS20_sf"/>
</dbReference>
<dbReference type="NCBIfam" id="TIGR00029">
    <property type="entry name" value="S20"/>
    <property type="match status" value="1"/>
</dbReference>
<dbReference type="PANTHER" id="PTHR33398">
    <property type="entry name" value="30S RIBOSOMAL PROTEIN S20"/>
    <property type="match status" value="1"/>
</dbReference>
<dbReference type="PANTHER" id="PTHR33398:SF1">
    <property type="entry name" value="SMALL RIBOSOMAL SUBUNIT PROTEIN BS20C"/>
    <property type="match status" value="1"/>
</dbReference>
<dbReference type="Pfam" id="PF01649">
    <property type="entry name" value="Ribosomal_S20p"/>
    <property type="match status" value="1"/>
</dbReference>
<dbReference type="SUPFAM" id="SSF46992">
    <property type="entry name" value="Ribosomal protein S20"/>
    <property type="match status" value="1"/>
</dbReference>
<evidence type="ECO:0000255" key="1">
    <source>
        <dbReference type="HAMAP-Rule" id="MF_00500"/>
    </source>
</evidence>
<evidence type="ECO:0000256" key="2">
    <source>
        <dbReference type="SAM" id="MobiDB-lite"/>
    </source>
</evidence>
<evidence type="ECO:0000305" key="3"/>
<sequence>MANHASADKRNRQRITRTARNRAIKSELRTTVKKARTALKGVPQESAAPVTAAVSALDRAASKGTIPAKRASRVKSRLALALHKASVAAKTAAS</sequence>
<name>RS20_SORC5</name>
<gene>
    <name evidence="1" type="primary">rpsT</name>
    <name type="ordered locus">sce8677</name>
</gene>